<accession>Q9U1W2</accession>
<accession>Q9U1W3</accession>
<protein>
    <recommendedName>
        <fullName>Mediator of RNA polymerase II transcription subunit 8</fullName>
    </recommendedName>
    <alternativeName>
        <fullName>Mediator complex subunit 8</fullName>
    </alternativeName>
</protein>
<organism>
    <name type="scientific">Caenorhabditis elegans</name>
    <dbReference type="NCBI Taxonomy" id="6239"/>
    <lineage>
        <taxon>Eukaryota</taxon>
        <taxon>Metazoa</taxon>
        <taxon>Ecdysozoa</taxon>
        <taxon>Nematoda</taxon>
        <taxon>Chromadorea</taxon>
        <taxon>Rhabditida</taxon>
        <taxon>Rhabditina</taxon>
        <taxon>Rhabditomorpha</taxon>
        <taxon>Rhabditoidea</taxon>
        <taxon>Rhabditidae</taxon>
        <taxon>Peloderinae</taxon>
        <taxon>Caenorhabditis</taxon>
    </lineage>
</organism>
<feature type="chain" id="PRO_0000304532" description="Mediator of RNA polymerase II transcription subunit 8">
    <location>
        <begin position="1"/>
        <end position="297"/>
    </location>
</feature>
<feature type="region of interest" description="Disordered" evidence="2">
    <location>
        <begin position="204"/>
        <end position="297"/>
    </location>
</feature>
<feature type="compositionally biased region" description="Low complexity" evidence="2">
    <location>
        <begin position="223"/>
        <end position="239"/>
    </location>
</feature>
<feature type="compositionally biased region" description="Low complexity" evidence="2">
    <location>
        <begin position="248"/>
        <end position="262"/>
    </location>
</feature>
<feature type="compositionally biased region" description="Low complexity" evidence="2">
    <location>
        <begin position="271"/>
        <end position="284"/>
    </location>
</feature>
<feature type="compositionally biased region" description="Polar residues" evidence="2">
    <location>
        <begin position="285"/>
        <end position="297"/>
    </location>
</feature>
<feature type="splice variant" id="VSP_028028" description="In isoform a." evidence="3">
    <original>KFQQ</original>
    <variation>TMMAPGQMIGHPIQQQRPPMHQMPPNMTIQRQ</variation>
    <location>
        <begin position="294"/>
        <end position="297"/>
    </location>
</feature>
<keyword id="KW-0010">Activator</keyword>
<keyword id="KW-0025">Alternative splicing</keyword>
<keyword id="KW-0539">Nucleus</keyword>
<keyword id="KW-1185">Reference proteome</keyword>
<keyword id="KW-0804">Transcription</keyword>
<keyword id="KW-0805">Transcription regulation</keyword>
<proteinExistence type="inferred from homology"/>
<sequence>MEYPNPPPPVTSNYQGEPEKIAQATDMMIKRVTDAKKIIEELLQMLDLQEKCPWPLMLEKFSTLASFMSSLQSSVRKSGMPHGHEDYGQFLRSHVLVTQRLQYEPDETLQRATQGRVMSWNHALVPEYLRTKPNPEMENEEGMLDGERSAKSADLVVRQIAAYNKNIEGLINHLNSVDRMHTEAAIEKPTYNRDETAKIVKSILTGEGIRSQRTMAPAPPSSAPMTTAPSSTGPSSSQPISGNQPEYQGSQLRQQLSGGQPQTSQAHLPMYSHHQQPQYSHQQPMNPQHHSPMKFQQ</sequence>
<evidence type="ECO:0000250" key="1"/>
<evidence type="ECO:0000256" key="2">
    <source>
        <dbReference type="SAM" id="MobiDB-lite"/>
    </source>
</evidence>
<evidence type="ECO:0000305" key="3"/>
<comment type="function">
    <text evidence="1">Component of the Mediator complex, a coactivator involved in the regulated transcription of nearly all RNA polymerase II-dependent genes. Mediator functions as a bridge to convey information from gene-specific regulatory proteins to the basal RNA polymerase II transcription machinery. Mediator is recruited to promoters by direct interactions with regulatory proteins and serves as a scaffold for the assembly of a functional preinitiation complex with RNA polymerase II and the general transcription factors (By similarity).</text>
</comment>
<comment type="subunit">
    <text evidence="1">Component of the Mediator complex.</text>
</comment>
<comment type="subcellular location">
    <subcellularLocation>
        <location evidence="3">Nucleus</location>
    </subcellularLocation>
</comment>
<comment type="alternative products">
    <event type="alternative splicing"/>
    <isoform>
        <id>Q9U1W2-1</id>
        <name>b</name>
        <sequence type="displayed"/>
    </isoform>
    <isoform>
        <id>Q9U1W2-2</id>
        <name>a</name>
        <sequence type="described" ref="VSP_028028"/>
    </isoform>
</comment>
<comment type="similarity">
    <text evidence="3">Belongs to the Mediator complex subunit 8 family.</text>
</comment>
<dbReference type="EMBL" id="AL110499">
    <property type="protein sequence ID" value="CAB57912.1"/>
    <property type="molecule type" value="Genomic_DNA"/>
</dbReference>
<dbReference type="EMBL" id="AL110499">
    <property type="protein sequence ID" value="CAB57913.1"/>
    <property type="molecule type" value="Genomic_DNA"/>
</dbReference>
<dbReference type="PIR" id="T31474">
    <property type="entry name" value="T31474"/>
</dbReference>
<dbReference type="RefSeq" id="NP_496463.2">
    <molecule id="Q9U1W2-1"/>
    <property type="nucleotide sequence ID" value="NM_064062.4"/>
</dbReference>
<dbReference type="RefSeq" id="NP_496464.2">
    <molecule id="Q9U1W2-2"/>
    <property type="nucleotide sequence ID" value="NM_064063.4"/>
</dbReference>
<dbReference type="SMR" id="Q9U1W2"/>
<dbReference type="BioGRID" id="40070">
    <property type="interactions" value="39"/>
</dbReference>
<dbReference type="DIP" id="DIP-25584N"/>
<dbReference type="FunCoup" id="Q9U1W2">
    <property type="interactions" value="2877"/>
</dbReference>
<dbReference type="IntAct" id="Q9U1W2">
    <property type="interactions" value="36"/>
</dbReference>
<dbReference type="STRING" id="6239.Y62F5A.1a.1"/>
<dbReference type="PaxDb" id="6239-Y62F5A.1a"/>
<dbReference type="PeptideAtlas" id="Q9U1W2"/>
<dbReference type="EnsemblMetazoa" id="Y62F5A.1a.1">
    <molecule id="Q9U1W2-2"/>
    <property type="protein sequence ID" value="Y62F5A.1a.1"/>
    <property type="gene ID" value="WBGene00007013"/>
</dbReference>
<dbReference type="EnsemblMetazoa" id="Y62F5A.1b.1">
    <molecule id="Q9U1W2-1"/>
    <property type="protein sequence ID" value="Y62F5A.1b.1"/>
    <property type="gene ID" value="WBGene00007013"/>
</dbReference>
<dbReference type="GeneID" id="174763"/>
<dbReference type="KEGG" id="cel:CELE_Y62F5A.1"/>
<dbReference type="UCSC" id="Y62F5A.1a">
    <molecule id="Q9U1W2-1"/>
    <property type="organism name" value="c. elegans"/>
</dbReference>
<dbReference type="AGR" id="WB:WBGene00007013"/>
<dbReference type="CTD" id="174763"/>
<dbReference type="WormBase" id="Y62F5A.1a">
    <molecule id="Q9U1W2-2"/>
    <property type="protein sequence ID" value="CE24544"/>
    <property type="gene ID" value="WBGene00007013"/>
    <property type="gene designation" value="mdt-8"/>
</dbReference>
<dbReference type="WormBase" id="Y62F5A.1b">
    <molecule id="Q9U1W2-1"/>
    <property type="protein sequence ID" value="CE24545"/>
    <property type="gene ID" value="WBGene00007013"/>
    <property type="gene designation" value="mdt-8"/>
</dbReference>
<dbReference type="eggNOG" id="KOG3583">
    <property type="taxonomic scope" value="Eukaryota"/>
</dbReference>
<dbReference type="GeneTree" id="ENSGT00390000011838"/>
<dbReference type="HOGENOM" id="CLU_799832_0_0_1"/>
<dbReference type="InParanoid" id="Q9U1W2"/>
<dbReference type="OMA" id="NRIHCWN"/>
<dbReference type="OrthoDB" id="150687at2759"/>
<dbReference type="PhylomeDB" id="Q9U1W2"/>
<dbReference type="SignaLink" id="Q9U1W2"/>
<dbReference type="PRO" id="PR:Q9U1W2"/>
<dbReference type="Proteomes" id="UP000001940">
    <property type="component" value="Chromosome II"/>
</dbReference>
<dbReference type="Bgee" id="WBGene00007013">
    <property type="expression patterns" value="Expressed in germ line (C elegans) and 4 other cell types or tissues"/>
</dbReference>
<dbReference type="GO" id="GO:0070847">
    <property type="term" value="C:core mediator complex"/>
    <property type="evidence" value="ECO:0000318"/>
    <property type="project" value="GO_Central"/>
</dbReference>
<dbReference type="GO" id="GO:0016592">
    <property type="term" value="C:mediator complex"/>
    <property type="evidence" value="ECO:0000318"/>
    <property type="project" value="GO_Central"/>
</dbReference>
<dbReference type="GO" id="GO:0000978">
    <property type="term" value="F:RNA polymerase II cis-regulatory region sequence-specific DNA binding"/>
    <property type="evidence" value="ECO:0000318"/>
    <property type="project" value="GO_Central"/>
</dbReference>
<dbReference type="GO" id="GO:0003712">
    <property type="term" value="F:transcription coregulator activity"/>
    <property type="evidence" value="ECO:0000318"/>
    <property type="project" value="GO_Central"/>
</dbReference>
<dbReference type="GO" id="GO:0006357">
    <property type="term" value="P:regulation of transcription by RNA polymerase II"/>
    <property type="evidence" value="ECO:0000318"/>
    <property type="project" value="GO_Central"/>
</dbReference>
<dbReference type="InterPro" id="IPR019364">
    <property type="entry name" value="Mediatior_Med8_fun/met"/>
</dbReference>
<dbReference type="PANTHER" id="PTHR13074">
    <property type="entry name" value="MEDIATOR OF RNA POLYMERASE II TRANSCRIPTION SUBUNIT 8"/>
    <property type="match status" value="1"/>
</dbReference>
<dbReference type="PANTHER" id="PTHR13074:SF9">
    <property type="entry name" value="MEDIATOR OF RNA POLYMERASE II TRANSCRIPTION SUBUNIT 8"/>
    <property type="match status" value="1"/>
</dbReference>
<dbReference type="Pfam" id="PF10232">
    <property type="entry name" value="Med8"/>
    <property type="match status" value="1"/>
</dbReference>
<reference key="1">
    <citation type="journal article" date="1998" name="Science">
        <title>Genome sequence of the nematode C. elegans: a platform for investigating biology.</title>
        <authorList>
            <consortium name="The C. elegans sequencing consortium"/>
        </authorList>
    </citation>
    <scope>NUCLEOTIDE SEQUENCE [LARGE SCALE GENOMIC DNA]</scope>
    <scope>ALTERNATIVE SPLICING</scope>
    <source>
        <strain>Bristol N2</strain>
    </source>
</reference>
<name>MED8_CAEEL</name>
<gene>
    <name type="primary">mdt-8</name>
    <name type="ORF">Y62F5A.1</name>
</gene>